<protein>
    <recommendedName>
        <fullName evidence="1">Glucose-1-phosphate adenylyltransferase</fullName>
        <ecNumber evidence="1">2.7.7.27</ecNumber>
    </recommendedName>
    <alternativeName>
        <fullName evidence="1">ADP-glucose pyrophosphorylase</fullName>
        <shortName evidence="1">ADPGlc PPase</shortName>
    </alternativeName>
    <alternativeName>
        <fullName evidence="1">ADP-glucose synthase</fullName>
    </alternativeName>
</protein>
<feature type="chain" id="PRO_0000261866" description="Glucose-1-phosphate adenylyltransferase">
    <location>
        <begin position="1"/>
        <end position="398"/>
    </location>
</feature>
<feature type="binding site" evidence="1">
    <location>
        <position position="100"/>
    </location>
    <ligand>
        <name>alpha-D-glucose 1-phosphate</name>
        <dbReference type="ChEBI" id="CHEBI:58601"/>
    </ligand>
</feature>
<feature type="binding site" evidence="1">
    <location>
        <position position="165"/>
    </location>
    <ligand>
        <name>alpha-D-glucose 1-phosphate</name>
        <dbReference type="ChEBI" id="CHEBI:58601"/>
    </ligand>
</feature>
<feature type="binding site" evidence="1">
    <location>
        <begin position="180"/>
        <end position="181"/>
    </location>
    <ligand>
        <name>alpha-D-glucose 1-phosphate</name>
        <dbReference type="ChEBI" id="CHEBI:58601"/>
    </ligand>
</feature>
<feature type="binding site" evidence="1">
    <location>
        <position position="191"/>
    </location>
    <ligand>
        <name>alpha-D-glucose 1-phosphate</name>
        <dbReference type="ChEBI" id="CHEBI:58601"/>
    </ligand>
</feature>
<keyword id="KW-0067">ATP-binding</keyword>
<keyword id="KW-0119">Carbohydrate metabolism</keyword>
<keyword id="KW-0320">Glycogen biosynthesis</keyword>
<keyword id="KW-0321">Glycogen metabolism</keyword>
<keyword id="KW-0547">Nucleotide-binding</keyword>
<keyword id="KW-0548">Nucleotidyltransferase</keyword>
<keyword id="KW-1185">Reference proteome</keyword>
<keyword id="KW-0808">Transferase</keyword>
<proteinExistence type="inferred from homology"/>
<comment type="function">
    <text evidence="1">Involved in the biosynthesis of ADP-glucose, a building block required for the elongation reactions to produce glycogen. Catalyzes the reaction between ATP and alpha-D-glucose 1-phosphate (G1P) to produce pyrophosphate and ADP-Glc.</text>
</comment>
<comment type="catalytic activity">
    <reaction evidence="1">
        <text>alpha-D-glucose 1-phosphate + ATP + H(+) = ADP-alpha-D-glucose + diphosphate</text>
        <dbReference type="Rhea" id="RHEA:12120"/>
        <dbReference type="ChEBI" id="CHEBI:15378"/>
        <dbReference type="ChEBI" id="CHEBI:30616"/>
        <dbReference type="ChEBI" id="CHEBI:33019"/>
        <dbReference type="ChEBI" id="CHEBI:57498"/>
        <dbReference type="ChEBI" id="CHEBI:58601"/>
        <dbReference type="EC" id="2.7.7.27"/>
    </reaction>
</comment>
<comment type="pathway">
    <text evidence="1">Glycan biosynthesis; glycogen biosynthesis.</text>
</comment>
<comment type="subunit">
    <text evidence="1">Homotetramer.</text>
</comment>
<comment type="similarity">
    <text evidence="1">Belongs to the bacterial/plant glucose-1-phosphate adenylyltransferase family.</text>
</comment>
<sequence>MRKKECIAMLLAGGQGSRLGCLTRNIPKPAVSFAGKYRIIDFSLSNCSNSNIDTVGVLTQYKPFALNTYINMGSAWDLNCLNGGIHILPPFVGEAQGSWYKGTANAIYQNMDFINFYNPEYILILSGDHIYQMDYYEMLSYHKQKHAEVTLSAIAVPWEEASRFGVMVTDAGGRIIRFEEKPPRPESNLASMGVYIFKWDVLKEALLEDEQDPQSDHDFGKNVLPRLLQQGRRLYSYLFHGYWRDVGTIESYYNANMEVLQEERVDKFFELKQRVFSNEEILAPQHLGERAKIHNSLIGNGCTILGEVRDSVIASGVYVGEGSLIEQSILLPNSEIYEDVRLHKTILGENAIVRAHCRIGDKREGNPPQEGITVIGDHLHIPEGTVISEGENVRKDTA</sequence>
<gene>
    <name evidence="1" type="primary">glgC</name>
    <name type="ordered locus">DSY2038</name>
</gene>
<reference key="1">
    <citation type="journal article" date="2006" name="J. Bacteriol.">
        <title>Complete genome sequence of the dehalorespiring bacterium Desulfitobacterium hafniense Y51 and comparison with Dehalococcoides ethenogenes 195.</title>
        <authorList>
            <person name="Nonaka H."/>
            <person name="Keresztes G."/>
            <person name="Shinoda Y."/>
            <person name="Ikenaga Y."/>
            <person name="Abe M."/>
            <person name="Naito K."/>
            <person name="Inatomi K."/>
            <person name="Furukawa K."/>
            <person name="Inui M."/>
            <person name="Yukawa H."/>
        </authorList>
    </citation>
    <scope>NUCLEOTIDE SEQUENCE [LARGE SCALE GENOMIC DNA]</scope>
    <source>
        <strain>Y51</strain>
    </source>
</reference>
<organism>
    <name type="scientific">Desulfitobacterium hafniense (strain Y51)</name>
    <dbReference type="NCBI Taxonomy" id="138119"/>
    <lineage>
        <taxon>Bacteria</taxon>
        <taxon>Bacillati</taxon>
        <taxon>Bacillota</taxon>
        <taxon>Clostridia</taxon>
        <taxon>Eubacteriales</taxon>
        <taxon>Desulfitobacteriaceae</taxon>
        <taxon>Desulfitobacterium</taxon>
    </lineage>
</organism>
<evidence type="ECO:0000255" key="1">
    <source>
        <dbReference type="HAMAP-Rule" id="MF_00624"/>
    </source>
</evidence>
<name>GLGC_DESHY</name>
<accession>Q24VW5</accession>
<dbReference type="EC" id="2.7.7.27" evidence="1"/>
<dbReference type="EMBL" id="AP008230">
    <property type="protein sequence ID" value="BAE83827.1"/>
    <property type="molecule type" value="Genomic_DNA"/>
</dbReference>
<dbReference type="RefSeq" id="WP_011460012.1">
    <property type="nucleotide sequence ID" value="NC_007907.1"/>
</dbReference>
<dbReference type="SMR" id="Q24VW5"/>
<dbReference type="STRING" id="138119.DSY2038"/>
<dbReference type="KEGG" id="dsy:DSY2038"/>
<dbReference type="eggNOG" id="COG0448">
    <property type="taxonomic scope" value="Bacteria"/>
</dbReference>
<dbReference type="HOGENOM" id="CLU_029499_14_0_9"/>
<dbReference type="UniPathway" id="UPA00164"/>
<dbReference type="Proteomes" id="UP000001946">
    <property type="component" value="Chromosome"/>
</dbReference>
<dbReference type="GO" id="GO:0005524">
    <property type="term" value="F:ATP binding"/>
    <property type="evidence" value="ECO:0007669"/>
    <property type="project" value="UniProtKB-KW"/>
</dbReference>
<dbReference type="GO" id="GO:0008878">
    <property type="term" value="F:glucose-1-phosphate adenylyltransferase activity"/>
    <property type="evidence" value="ECO:0007669"/>
    <property type="project" value="UniProtKB-UniRule"/>
</dbReference>
<dbReference type="GO" id="GO:0005978">
    <property type="term" value="P:glycogen biosynthetic process"/>
    <property type="evidence" value="ECO:0007669"/>
    <property type="project" value="UniProtKB-UniRule"/>
</dbReference>
<dbReference type="CDD" id="cd02508">
    <property type="entry name" value="ADP_Glucose_PP"/>
    <property type="match status" value="1"/>
</dbReference>
<dbReference type="CDD" id="cd04651">
    <property type="entry name" value="LbH_G1P_AT_C"/>
    <property type="match status" value="1"/>
</dbReference>
<dbReference type="Gene3D" id="2.160.10.10">
    <property type="entry name" value="Hexapeptide repeat proteins"/>
    <property type="match status" value="1"/>
</dbReference>
<dbReference type="Gene3D" id="3.90.550.10">
    <property type="entry name" value="Spore Coat Polysaccharide Biosynthesis Protein SpsA, Chain A"/>
    <property type="match status" value="1"/>
</dbReference>
<dbReference type="HAMAP" id="MF_00624">
    <property type="entry name" value="GlgC"/>
    <property type="match status" value="1"/>
</dbReference>
<dbReference type="InterPro" id="IPR011831">
    <property type="entry name" value="ADP-Glc_PPase"/>
</dbReference>
<dbReference type="InterPro" id="IPR005836">
    <property type="entry name" value="ADP_Glu_pyroP_CS"/>
</dbReference>
<dbReference type="InterPro" id="IPR023049">
    <property type="entry name" value="GlgC_bac"/>
</dbReference>
<dbReference type="InterPro" id="IPR056818">
    <property type="entry name" value="GlmU/GlgC-like_hexapep"/>
</dbReference>
<dbReference type="InterPro" id="IPR005835">
    <property type="entry name" value="NTP_transferase_dom"/>
</dbReference>
<dbReference type="InterPro" id="IPR029044">
    <property type="entry name" value="Nucleotide-diphossugar_trans"/>
</dbReference>
<dbReference type="InterPro" id="IPR011004">
    <property type="entry name" value="Trimer_LpxA-like_sf"/>
</dbReference>
<dbReference type="NCBIfam" id="TIGR02091">
    <property type="entry name" value="glgC"/>
    <property type="match status" value="1"/>
</dbReference>
<dbReference type="NCBIfam" id="NF003670">
    <property type="entry name" value="PRK05293.1"/>
    <property type="match status" value="1"/>
</dbReference>
<dbReference type="PANTHER" id="PTHR43523:SF2">
    <property type="entry name" value="GLUCOSE-1-PHOSPHATE ADENYLYLTRANSFERASE"/>
    <property type="match status" value="1"/>
</dbReference>
<dbReference type="PANTHER" id="PTHR43523">
    <property type="entry name" value="GLUCOSE-1-PHOSPHATE ADENYLYLTRANSFERASE-RELATED"/>
    <property type="match status" value="1"/>
</dbReference>
<dbReference type="Pfam" id="PF24894">
    <property type="entry name" value="Hexapep_GlmU"/>
    <property type="match status" value="1"/>
</dbReference>
<dbReference type="Pfam" id="PF00483">
    <property type="entry name" value="NTP_transferase"/>
    <property type="match status" value="1"/>
</dbReference>
<dbReference type="SUPFAM" id="SSF53448">
    <property type="entry name" value="Nucleotide-diphospho-sugar transferases"/>
    <property type="match status" value="1"/>
</dbReference>
<dbReference type="SUPFAM" id="SSF51161">
    <property type="entry name" value="Trimeric LpxA-like enzymes"/>
    <property type="match status" value="1"/>
</dbReference>
<dbReference type="PROSITE" id="PS00809">
    <property type="entry name" value="ADP_GLC_PYROPHOSPH_2"/>
    <property type="match status" value="1"/>
</dbReference>
<dbReference type="PROSITE" id="PS00810">
    <property type="entry name" value="ADP_GLC_PYROPHOSPH_3"/>
    <property type="match status" value="1"/>
</dbReference>